<keyword id="KW-0150">Chloroplast</keyword>
<keyword id="KW-0934">Plastid</keyword>
<keyword id="KW-0687">Ribonucleoprotein</keyword>
<keyword id="KW-0689">Ribosomal protein</keyword>
<keyword id="KW-0694">RNA-binding</keyword>
<keyword id="KW-0699">rRNA-binding</keyword>
<evidence type="ECO:0000250" key="1"/>
<evidence type="ECO:0000255" key="2">
    <source>
        <dbReference type="HAMAP-Rule" id="MF_00403"/>
    </source>
</evidence>
<evidence type="ECO:0000256" key="3">
    <source>
        <dbReference type="SAM" id="MobiDB-lite"/>
    </source>
</evidence>
<evidence type="ECO:0000305" key="4"/>
<comment type="function">
    <text evidence="1">With S4 and S5 plays an important role in translational accuracy. Located at the interface of the 30S and 50S subunits (By similarity).</text>
</comment>
<comment type="subunit">
    <text evidence="1">Part of the 30S ribosomal subunit.</text>
</comment>
<comment type="subcellular location">
    <subcellularLocation>
        <location>Plastid</location>
        <location>Chloroplast</location>
    </subcellularLocation>
</comment>
<comment type="similarity">
    <text evidence="4">Belongs to the universal ribosomal protein uS12 family.</text>
</comment>
<reference key="1">
    <citation type="journal article" date="2006" name="Mol. Biol. Evol.">
        <title>The complete chloroplast genome sequence of Pelargonium x hortorum: organization and evolution of the largest and most highly rearranged chloroplast genome of land plants.</title>
        <authorList>
            <person name="Chumley T.W."/>
            <person name="Palmer J.D."/>
            <person name="Mower J.P."/>
            <person name="Fourcade H.M."/>
            <person name="Calie P.J."/>
            <person name="Boore J.L."/>
            <person name="Jansen R.K."/>
        </authorList>
    </citation>
    <scope>NUCLEOTIDE SEQUENCE [LARGE SCALE GENOMIC DNA]</scope>
    <source>
        <strain>cv. Ringo White</strain>
    </source>
</reference>
<protein>
    <recommendedName>
        <fullName evidence="2 4">Small ribosomal subunit protein uS12cz/uS12cy/uS12cx/uS12w</fullName>
    </recommendedName>
    <alternativeName>
        <fullName evidence="4">30S ribosomal protein S12, chloroplastic</fullName>
    </alternativeName>
</protein>
<accession>Q06FR2</accession>
<sequence>MPTSNQLLRNSRQPVRKTKKTPALRGCPQRRGRCSKVYIINPKKPNSGNRKVARVRLTSGFEITAYIPGVGHNVQEHSVVLVRGGRVKDLPGVRYHIVRGTLDAAGVKDRKQGRSKYGVKKPK</sequence>
<organism>
    <name type="scientific">Pelargonium hortorum</name>
    <name type="common">Common geranium</name>
    <name type="synonym">Pelargonium inquinans x Pelargonium zonale</name>
    <dbReference type="NCBI Taxonomy" id="4031"/>
    <lineage>
        <taxon>Eukaryota</taxon>
        <taxon>Viridiplantae</taxon>
        <taxon>Streptophyta</taxon>
        <taxon>Embryophyta</taxon>
        <taxon>Tracheophyta</taxon>
        <taxon>Spermatophyta</taxon>
        <taxon>Magnoliopsida</taxon>
        <taxon>eudicotyledons</taxon>
        <taxon>Gunneridae</taxon>
        <taxon>Pentapetalae</taxon>
        <taxon>rosids</taxon>
        <taxon>malvids</taxon>
        <taxon>Geraniales</taxon>
        <taxon>Geraniaceae</taxon>
        <taxon>Pelargonium</taxon>
    </lineage>
</organism>
<gene>
    <name type="primary">rps12-A</name>
</gene>
<gene>
    <name type="primary">rps12-B</name>
</gene>
<gene>
    <name type="primary">rps12-C</name>
</gene>
<gene>
    <name type="primary">rps12-D</name>
</gene>
<dbReference type="EMBL" id="DQ897681">
    <property type="protein sequence ID" value="ABI17286.1"/>
    <property type="molecule type" value="Genomic_DNA"/>
</dbReference>
<dbReference type="EMBL" id="DQ897681">
    <property type="protein sequence ID" value="ABI17329.1"/>
    <property type="molecule type" value="Genomic_DNA"/>
</dbReference>
<dbReference type="EMBL" id="DQ897681">
    <property type="protein sequence ID" value="ABI18375.1"/>
    <property type="molecule type" value="Genomic_DNA"/>
</dbReference>
<dbReference type="EMBL" id="DQ897681">
    <property type="protein sequence ID" value="ABI18376.1"/>
    <property type="molecule type" value="Genomic_DNA"/>
</dbReference>
<dbReference type="SMR" id="Q06FR2"/>
<dbReference type="GO" id="GO:0009507">
    <property type="term" value="C:chloroplast"/>
    <property type="evidence" value="ECO:0007669"/>
    <property type="project" value="UniProtKB-SubCell"/>
</dbReference>
<dbReference type="GO" id="GO:0015935">
    <property type="term" value="C:small ribosomal subunit"/>
    <property type="evidence" value="ECO:0007669"/>
    <property type="project" value="InterPro"/>
</dbReference>
<dbReference type="GO" id="GO:0019843">
    <property type="term" value="F:rRNA binding"/>
    <property type="evidence" value="ECO:0007669"/>
    <property type="project" value="UniProtKB-UniRule"/>
</dbReference>
<dbReference type="GO" id="GO:0003735">
    <property type="term" value="F:structural constituent of ribosome"/>
    <property type="evidence" value="ECO:0007669"/>
    <property type="project" value="InterPro"/>
</dbReference>
<dbReference type="GO" id="GO:0006412">
    <property type="term" value="P:translation"/>
    <property type="evidence" value="ECO:0007669"/>
    <property type="project" value="UniProtKB-UniRule"/>
</dbReference>
<dbReference type="CDD" id="cd03368">
    <property type="entry name" value="Ribosomal_S12"/>
    <property type="match status" value="1"/>
</dbReference>
<dbReference type="FunFam" id="2.40.50.140:FF:000099">
    <property type="entry name" value="Ribosomal protein S12, mitochondrial"/>
    <property type="match status" value="1"/>
</dbReference>
<dbReference type="Gene3D" id="2.40.50.140">
    <property type="entry name" value="Nucleic acid-binding proteins"/>
    <property type="match status" value="1"/>
</dbReference>
<dbReference type="HAMAP" id="MF_00403_B">
    <property type="entry name" value="Ribosomal_uS12_B"/>
    <property type="match status" value="1"/>
</dbReference>
<dbReference type="InterPro" id="IPR012340">
    <property type="entry name" value="NA-bd_OB-fold"/>
</dbReference>
<dbReference type="InterPro" id="IPR006032">
    <property type="entry name" value="Ribosomal_uS12"/>
</dbReference>
<dbReference type="InterPro" id="IPR005679">
    <property type="entry name" value="Ribosomal_uS12_bac"/>
</dbReference>
<dbReference type="NCBIfam" id="TIGR00981">
    <property type="entry name" value="rpsL_bact"/>
    <property type="match status" value="1"/>
</dbReference>
<dbReference type="PANTHER" id="PTHR11652">
    <property type="entry name" value="30S RIBOSOMAL PROTEIN S12 FAMILY MEMBER"/>
    <property type="match status" value="1"/>
</dbReference>
<dbReference type="Pfam" id="PF00164">
    <property type="entry name" value="Ribosom_S12_S23"/>
    <property type="match status" value="1"/>
</dbReference>
<dbReference type="PIRSF" id="PIRSF002133">
    <property type="entry name" value="Ribosomal_S12/S23"/>
    <property type="match status" value="1"/>
</dbReference>
<dbReference type="PRINTS" id="PR01034">
    <property type="entry name" value="RIBOSOMALS12"/>
</dbReference>
<dbReference type="SUPFAM" id="SSF50249">
    <property type="entry name" value="Nucleic acid-binding proteins"/>
    <property type="match status" value="1"/>
</dbReference>
<name>RR12_PELHO</name>
<feature type="chain" id="PRO_0000276623" description="Small ribosomal subunit protein uS12cz/uS12cy/uS12cx/uS12w">
    <location>
        <begin position="1"/>
        <end position="123"/>
    </location>
</feature>
<feature type="region of interest" description="Disordered" evidence="3">
    <location>
        <begin position="1"/>
        <end position="30"/>
    </location>
</feature>
<feature type="compositionally biased region" description="Polar residues" evidence="3">
    <location>
        <begin position="1"/>
        <end position="13"/>
    </location>
</feature>
<feature type="compositionally biased region" description="Basic residues" evidence="3">
    <location>
        <begin position="14"/>
        <end position="30"/>
    </location>
</feature>
<geneLocation type="chloroplast"/>
<proteinExistence type="inferred from homology"/>